<dbReference type="EC" id="1.14.13.-" evidence="3"/>
<dbReference type="EMBL" id="AE004091">
    <property type="protein sequence ID" value="AAG04927.1"/>
    <property type="molecule type" value="Genomic_DNA"/>
</dbReference>
<dbReference type="PIR" id="A83453">
    <property type="entry name" value="A83453"/>
</dbReference>
<dbReference type="RefSeq" id="NP_250229.1">
    <property type="nucleotide sequence ID" value="NC_002516.2"/>
</dbReference>
<dbReference type="RefSeq" id="WP_010895574.1">
    <property type="nucleotide sequence ID" value="NZ_QZGE01000032.1"/>
</dbReference>
<dbReference type="SMR" id="Q9I3H5"/>
<dbReference type="STRING" id="208964.PA1538"/>
<dbReference type="PaxDb" id="208964-PA1538"/>
<dbReference type="GeneID" id="880860"/>
<dbReference type="KEGG" id="pae:PA1538"/>
<dbReference type="PATRIC" id="fig|208964.12.peg.1591"/>
<dbReference type="PseudoCAP" id="PA1538"/>
<dbReference type="HOGENOM" id="CLU_006937_7_1_6"/>
<dbReference type="InParanoid" id="Q9I3H5"/>
<dbReference type="OrthoDB" id="312624at2"/>
<dbReference type="PhylomeDB" id="Q9I3H5"/>
<dbReference type="BioCyc" id="PAER208964:G1FZ6-1566-MONOMER"/>
<dbReference type="Proteomes" id="UP000002438">
    <property type="component" value="Chromosome"/>
</dbReference>
<dbReference type="GO" id="GO:0050660">
    <property type="term" value="F:flavin adenine dinucleotide binding"/>
    <property type="evidence" value="ECO:0007669"/>
    <property type="project" value="InterPro"/>
</dbReference>
<dbReference type="GO" id="GO:0004499">
    <property type="term" value="F:N,N-dimethylaniline monooxygenase activity"/>
    <property type="evidence" value="ECO:0007669"/>
    <property type="project" value="InterPro"/>
</dbReference>
<dbReference type="GO" id="GO:0050661">
    <property type="term" value="F:NADP binding"/>
    <property type="evidence" value="ECO:0007669"/>
    <property type="project" value="InterPro"/>
</dbReference>
<dbReference type="GO" id="GO:0016709">
    <property type="term" value="F:oxidoreductase activity, acting on paired donors, with incorporation or reduction of molecular oxygen, NAD(P)H as one donor, and incorporation of one atom of oxygen"/>
    <property type="evidence" value="ECO:0000314"/>
    <property type="project" value="UniProtKB"/>
</dbReference>
<dbReference type="FunFam" id="3.50.50.60:FF:000266">
    <property type="entry name" value="Baeyer-Villiger monooxygenase"/>
    <property type="match status" value="1"/>
</dbReference>
<dbReference type="Gene3D" id="3.50.50.60">
    <property type="entry name" value="FAD/NAD(P)-binding domain"/>
    <property type="match status" value="2"/>
</dbReference>
<dbReference type="InterPro" id="IPR051209">
    <property type="entry name" value="FAD-bind_Monooxygenase_sf"/>
</dbReference>
<dbReference type="InterPro" id="IPR036188">
    <property type="entry name" value="FAD/NAD-bd_sf"/>
</dbReference>
<dbReference type="InterPro" id="IPR020946">
    <property type="entry name" value="Flavin_mOase-like"/>
</dbReference>
<dbReference type="PANTHER" id="PTHR42877:SF4">
    <property type="entry name" value="FAD_NAD(P)-BINDING DOMAIN-CONTAINING PROTEIN-RELATED"/>
    <property type="match status" value="1"/>
</dbReference>
<dbReference type="PANTHER" id="PTHR42877">
    <property type="entry name" value="L-ORNITHINE N(5)-MONOOXYGENASE-RELATED"/>
    <property type="match status" value="1"/>
</dbReference>
<dbReference type="Pfam" id="PF00743">
    <property type="entry name" value="FMO-like"/>
    <property type="match status" value="1"/>
</dbReference>
<dbReference type="SUPFAM" id="SSF51905">
    <property type="entry name" value="FAD/NAD(P)-binding domain"/>
    <property type="match status" value="2"/>
</dbReference>
<keyword id="KW-0274">FAD</keyword>
<keyword id="KW-0285">Flavoprotein</keyword>
<keyword id="KW-0503">Monooxygenase</keyword>
<keyword id="KW-0521">NADP</keyword>
<keyword id="KW-0560">Oxidoreductase</keyword>
<keyword id="KW-1185">Reference proteome</keyword>
<proteinExistence type="evidence at protein level"/>
<gene>
    <name evidence="6" type="ordered locus">PA1538</name>
</gene>
<feature type="chain" id="PRO_0000431624" description="Baeyer-Villiger monooxygenase">
    <location>
        <begin position="1"/>
        <end position="527"/>
    </location>
</feature>
<feature type="binding site" evidence="1">
    <location>
        <position position="36"/>
    </location>
    <ligand>
        <name>FAD</name>
        <dbReference type="ChEBI" id="CHEBI:57692"/>
    </ligand>
</feature>
<feature type="binding site" evidence="1">
    <location>
        <position position="56"/>
    </location>
    <ligand>
        <name>FAD</name>
        <dbReference type="ChEBI" id="CHEBI:57692"/>
    </ligand>
</feature>
<feature type="binding site" evidence="1">
    <location>
        <begin position="64"/>
        <end position="67"/>
    </location>
    <ligand>
        <name>FAD</name>
        <dbReference type="ChEBI" id="CHEBI:57692"/>
    </ligand>
</feature>
<feature type="binding site" evidence="1">
    <location>
        <begin position="74"/>
        <end position="76"/>
    </location>
    <ligand>
        <name>NADP(+)</name>
        <dbReference type="ChEBI" id="CHEBI:58349"/>
    </ligand>
</feature>
<feature type="binding site" evidence="1">
    <location>
        <position position="76"/>
    </location>
    <ligand>
        <name>FAD</name>
        <dbReference type="ChEBI" id="CHEBI:57692"/>
    </ligand>
</feature>
<feature type="binding site" evidence="1">
    <location>
        <position position="82"/>
    </location>
    <ligand>
        <name>FAD</name>
        <dbReference type="ChEBI" id="CHEBI:57692"/>
    </ligand>
</feature>
<feature type="binding site" evidence="1">
    <location>
        <position position="125"/>
    </location>
    <ligand>
        <name>FAD</name>
        <dbReference type="ChEBI" id="CHEBI:57692"/>
    </ligand>
</feature>
<feature type="binding site" evidence="1">
    <location>
        <begin position="199"/>
        <end position="205"/>
    </location>
    <ligand>
        <name>NADP(+)</name>
        <dbReference type="ChEBI" id="CHEBI:58349"/>
    </ligand>
</feature>
<feature type="binding site" evidence="1">
    <location>
        <begin position="222"/>
        <end position="223"/>
    </location>
    <ligand>
        <name>NADP(+)</name>
        <dbReference type="ChEBI" id="CHEBI:58349"/>
    </ligand>
</feature>
<feature type="binding site" evidence="1">
    <location>
        <begin position="308"/>
        <end position="309"/>
    </location>
    <ligand>
        <name>NADP(+)</name>
        <dbReference type="ChEBI" id="CHEBI:58349"/>
    </ligand>
</feature>
<feature type="binding site" evidence="1">
    <location>
        <position position="415"/>
    </location>
    <ligand>
        <name>FAD</name>
        <dbReference type="ChEBI" id="CHEBI:57692"/>
    </ligand>
</feature>
<feature type="site" description="Transition state stabilizer" evidence="1">
    <location>
        <position position="309"/>
    </location>
</feature>
<name>BVMO_PSEAE</name>
<sequence length="527" mass="59467">MYTPANNHNRSLAMSTQPTPAAARHCKVAIIGTGFSGLGMAIRLRQEGEDDFLIFEKDAGVGGTWRVNNYPGCACDVQSHVYSFSFEANPEWTRMFARQPEIRAYLEKCWEKYRLQEKTLLNTEIGKLAWDERQSLWHLHDAQGNHYTANAVVSGMGGLSTPAYPRLDGLENFQGKVFHSQQWDHDYDLKGKRVAVIGTGASAIQFVPEIQPLVAALDLYQRTPPWILPKPDRAISETERRRFRRFPLVQKLWRGGLYSLLEGRVLGFTFAPQVMKLVQRLAIRHIHKQIKDPELRRKVTPDYTIGCKRILMSHNYYPALAAANSTVITEGIRAVTANGIVDGNGREREVDAIIFGTGFTANDPIPRGVVFGRDGRDLLDSWSKGPEAYKGTTTAGFPNLFFLMGPNTGLGHNSMVYMIESQIAYVLDALKLMKRRELLSLEVKAPVQERYNEYLQRKLDRSVWSVGGCKSWYLHPVSGRNCTLWPGFTWRFRALTRQFDASAYHLTTTPLAALSNEARQQAEGVPA</sequence>
<accession>Q9I3H5</accession>
<evidence type="ECO:0000250" key="1">
    <source>
        <dbReference type="UniProtKB" id="Q47PU3"/>
    </source>
</evidence>
<evidence type="ECO:0000250" key="2">
    <source>
        <dbReference type="UniProtKB" id="Q93TJ5"/>
    </source>
</evidence>
<evidence type="ECO:0000269" key="3">
    <source>
    </source>
</evidence>
<evidence type="ECO:0000303" key="4">
    <source>
    </source>
</evidence>
<evidence type="ECO:0000305" key="5"/>
<evidence type="ECO:0000312" key="6">
    <source>
        <dbReference type="EMBL" id="AAG04927.1"/>
    </source>
</evidence>
<organism>
    <name type="scientific">Pseudomonas aeruginosa (strain ATCC 15692 / DSM 22644 / CIP 104116 / JCM 14847 / LMG 12228 / 1C / PRS 101 / PAO1)</name>
    <dbReference type="NCBI Taxonomy" id="208964"/>
    <lineage>
        <taxon>Bacteria</taxon>
        <taxon>Pseudomonadati</taxon>
        <taxon>Pseudomonadota</taxon>
        <taxon>Gammaproteobacteria</taxon>
        <taxon>Pseudomonadales</taxon>
        <taxon>Pseudomonadaceae</taxon>
        <taxon>Pseudomonas</taxon>
    </lineage>
</organism>
<protein>
    <recommendedName>
        <fullName evidence="4">Baeyer-Villiger monooxygenase</fullName>
        <shortName evidence="4">BVMO</shortName>
        <ecNumber evidence="3">1.14.13.-</ecNumber>
    </recommendedName>
</protein>
<reference key="1">
    <citation type="journal article" date="2000" name="Nature">
        <title>Complete genome sequence of Pseudomonas aeruginosa PAO1, an opportunistic pathogen.</title>
        <authorList>
            <person name="Stover C.K."/>
            <person name="Pham X.-Q.T."/>
            <person name="Erwin A.L."/>
            <person name="Mizoguchi S.D."/>
            <person name="Warrener P."/>
            <person name="Hickey M.J."/>
            <person name="Brinkman F.S.L."/>
            <person name="Hufnagle W.O."/>
            <person name="Kowalik D.J."/>
            <person name="Lagrou M."/>
            <person name="Garber R.L."/>
            <person name="Goltry L."/>
            <person name="Tolentino E."/>
            <person name="Westbrock-Wadman S."/>
            <person name="Yuan Y."/>
            <person name="Brody L.L."/>
            <person name="Coulter S.N."/>
            <person name="Folger K.R."/>
            <person name="Kas A."/>
            <person name="Larbig K."/>
            <person name="Lim R.M."/>
            <person name="Smith K.A."/>
            <person name="Spencer D.H."/>
            <person name="Wong G.K.-S."/>
            <person name="Wu Z."/>
            <person name="Paulsen I.T."/>
            <person name="Reizer J."/>
            <person name="Saier M.H. Jr."/>
            <person name="Hancock R.E.W."/>
            <person name="Lory S."/>
            <person name="Olson M.V."/>
        </authorList>
    </citation>
    <scope>NUCLEOTIDE SEQUENCE [LARGE SCALE GENOMIC DNA]</scope>
    <source>
        <strain>ATCC 15692 / DSM 22644 / CIP 104116 / JCM 14847 / LMG 12228 / 1C / PRS 101 / PAO1</strain>
    </source>
</reference>
<reference key="2">
    <citation type="journal article" date="2007" name="J. Microbiol. Biotechnol.">
        <title>The analysis and application of a recombinant monooxygenase library as a biocatalyst for the Baeyer-Villiger reaction.</title>
        <authorList>
            <person name="Park J."/>
            <person name="Kim D."/>
            <person name="Kim S."/>
            <person name="Kim J."/>
            <person name="Bae K."/>
            <person name="Lee C."/>
        </authorList>
    </citation>
    <scope>FUNCTION</scope>
    <scope>CATALYTIC ACTIVITY</scope>
    <source>
        <strain>ATCC 15692 / DSM 22644 / CIP 104116 / JCM 14847 / LMG 12228 / 1C / PRS 101 / PAO1</strain>
    </source>
</reference>
<comment type="function">
    <text evidence="3">Catalyzes a Baeyer-Villiger oxidation reaction, i.e. the insertion of an oxygen atom into a carbon-carbon bond adjacent to a carbonyl, which converts ketones to esters or lactones using NADPH and/or NADH as an electron donor. Thus, can convert bicyclo[3.2.0]hept-2-en-6-one into the oxidative lactone products 2-oxabicyclo[3.3.0]oct-6-en-3-one and 3-oxabicyclo[3.3.0]oct-6-en-2-one. Is also able to catalyze the sulfoxidation of methyl phenyl sulfide (thioanisole).</text>
</comment>
<comment type="cofactor">
    <cofactor evidence="2">
        <name>FAD</name>
        <dbReference type="ChEBI" id="CHEBI:57692"/>
    </cofactor>
</comment>
<comment type="similarity">
    <text evidence="5">Belongs to the FAD-binding monooxygenase family.</text>
</comment>